<proteinExistence type="inferred from homology"/>
<keyword id="KW-0024">Alternative initiation</keyword>
<keyword id="KW-0167">Capsid protein</keyword>
<keyword id="KW-1176">Cytoplasmic inwards viral transport</keyword>
<keyword id="KW-0238">DNA-binding</keyword>
<keyword id="KW-1035">Host cytoplasm</keyword>
<keyword id="KW-0945">Host-virus interaction</keyword>
<keyword id="KW-1177">Microtubular inwards viral transport</keyword>
<keyword id="KW-0597">Phosphoprotein</keyword>
<keyword id="KW-0677">Repeat</keyword>
<keyword id="KW-0694">RNA-binding</keyword>
<keyword id="KW-1144">T=4 icosahedral capsid protein</keyword>
<keyword id="KW-1163">Viral penetration into host nucleus</keyword>
<keyword id="KW-0946">Virion</keyword>
<keyword id="KW-1160">Virus entry into host cell</keyword>
<name>CAPSD_HBVA6</name>
<organismHost>
    <name type="scientific">Homo sapiens</name>
    <name type="common">Human</name>
    <dbReference type="NCBI Taxonomy" id="9606"/>
</organismHost>
<organismHost>
    <name type="scientific">Pan troglodytes</name>
    <name type="common">Chimpanzee</name>
    <dbReference type="NCBI Taxonomy" id="9598"/>
</organismHost>
<dbReference type="EMBL" id="AF297625">
    <property type="protein sequence ID" value="AAK97202.1"/>
    <property type="status" value="ALT_INIT"/>
    <property type="molecule type" value="Genomic_DNA"/>
</dbReference>
<dbReference type="SMR" id="P0C695"/>
<dbReference type="Proteomes" id="UP000007909">
    <property type="component" value="Genome"/>
</dbReference>
<dbReference type="GO" id="GO:0043657">
    <property type="term" value="C:host cell"/>
    <property type="evidence" value="ECO:0007669"/>
    <property type="project" value="GOC"/>
</dbReference>
<dbReference type="GO" id="GO:0030430">
    <property type="term" value="C:host cell cytoplasm"/>
    <property type="evidence" value="ECO:0007669"/>
    <property type="project" value="UniProtKB-SubCell"/>
</dbReference>
<dbReference type="GO" id="GO:0039619">
    <property type="term" value="C:T=4 icosahedral viral capsid"/>
    <property type="evidence" value="ECO:0007669"/>
    <property type="project" value="UniProtKB-UniRule"/>
</dbReference>
<dbReference type="GO" id="GO:0003677">
    <property type="term" value="F:DNA binding"/>
    <property type="evidence" value="ECO:0007669"/>
    <property type="project" value="UniProtKB-UniRule"/>
</dbReference>
<dbReference type="GO" id="GO:0003723">
    <property type="term" value="F:RNA binding"/>
    <property type="evidence" value="ECO:0007669"/>
    <property type="project" value="UniProtKB-UniRule"/>
</dbReference>
<dbReference type="GO" id="GO:0005198">
    <property type="term" value="F:structural molecule activity"/>
    <property type="evidence" value="ECO:0007669"/>
    <property type="project" value="UniProtKB-UniRule"/>
</dbReference>
<dbReference type="GO" id="GO:0075521">
    <property type="term" value="P:microtubule-dependent intracellular transport of viral material towards nucleus"/>
    <property type="evidence" value="ECO:0007669"/>
    <property type="project" value="UniProtKB-UniRule"/>
</dbReference>
<dbReference type="GO" id="GO:0046718">
    <property type="term" value="P:symbiont entry into host cell"/>
    <property type="evidence" value="ECO:0007669"/>
    <property type="project" value="UniProtKB-UniRule"/>
</dbReference>
<dbReference type="GO" id="GO:0075732">
    <property type="term" value="P:viral penetration into host nucleus"/>
    <property type="evidence" value="ECO:0007669"/>
    <property type="project" value="UniProtKB-UniRule"/>
</dbReference>
<dbReference type="FunFam" id="1.10.4090.10:FF:000001">
    <property type="entry name" value="Capsid protein"/>
    <property type="match status" value="1"/>
</dbReference>
<dbReference type="Gene3D" id="1.10.4090.10">
    <property type="entry name" value="Viral capsid, core domain supefamily, Hepatitis B virus"/>
    <property type="match status" value="1"/>
</dbReference>
<dbReference type="HAMAP" id="MF_04076">
    <property type="entry name" value="HBV_HBEAG"/>
    <property type="match status" value="1"/>
</dbReference>
<dbReference type="InterPro" id="IPR002006">
    <property type="entry name" value="Hepatitis_core"/>
</dbReference>
<dbReference type="InterPro" id="IPR036459">
    <property type="entry name" value="Viral_capsid_core_dom_sf_HBV"/>
</dbReference>
<dbReference type="Pfam" id="PF00906">
    <property type="entry name" value="Hepatitis_core"/>
    <property type="match status" value="2"/>
</dbReference>
<dbReference type="SUPFAM" id="SSF47852">
    <property type="entry name" value="Hepatitis B viral capsid (hbcag)"/>
    <property type="match status" value="1"/>
</dbReference>
<reference key="1">
    <citation type="journal article" date="2001" name="J. Med. Virol.">
        <title>Molecular analysis of hepatitis B virus genomes isolated from black African patients with fulminant hepatitis B.</title>
        <authorList>
            <person name="Owiredu W.K."/>
            <person name="Kramvis A."/>
            <person name="Kew M.C."/>
        </authorList>
    </citation>
    <scope>NUCLEOTIDE SEQUENCE [GENOMIC DNA]</scope>
</reference>
<accession>P0C695</accession>
<comment type="function">
    <text evidence="1">Self assembles to form an icosahedral capsid. Most capsids appear to be large particles with an icosahedral symmetry of T=4 and consist of 240 copies of capsid protein, though a fraction forms smaller T=3 particles consisting of 180 capsid proteins. Entering capsids are transported along microtubules to the nucleus. Phosphorylation of the capsid is thought to induce exposure of nuclear localization signal in the C-terminal portion of the capsid protein that allows binding to the nuclear pore complex via the importin (karyopherin-) alpha and beta. Capsids are imported in intact form through the nuclear pore into the nuclear basket, where it probably binds NUP153. Only capsids that contain the mature viral genome can release the viral DNA and capsid protein into the nucleoplasm. Immature capsids get stuck in the basket. Capsids encapsulate the pre-genomic RNA and the P protein. Pre-genomic RNA is reverse-transcribed into DNA while the capsid is still in the cytoplasm. The capsid can then either be directed to the nucleus, providing more genomes for transcription, or bud through the endoplasmic reticulum to provide new virions.</text>
</comment>
<comment type="subunit">
    <text evidence="1">Homodimerizes, then multimerizes. Interacts with cytosol exposed regions of viral L glycoprotein present in the reticulum-to-Golgi compartment. Interacts with human FLNB. Phosphorylated form interacts with host importin alpha; this interaction depends on the exposure of the NLS, which itself depends upon genome maturation and/or phosphorylation of the capsid protein. Interacts with host NUP153.</text>
</comment>
<comment type="subcellular location">
    <subcellularLocation>
        <location evidence="1">Virion</location>
    </subcellularLocation>
    <subcellularLocation>
        <location evidence="1">Host cytoplasm</location>
    </subcellularLocation>
</comment>
<comment type="alternative products">
    <event type="alternative initiation"/>
    <isoform>
        <id>P0C695-1</id>
        <name>Capsid protein</name>
        <sequence type="displayed"/>
    </isoform>
    <isoform>
        <id>Q91C37-1</id>
        <name>External core antigen</name>
        <sequence type="external"/>
    </isoform>
</comment>
<comment type="PTM">
    <text evidence="1">Phosphorylated by host SRPK1, SRPK2, and maybe protein kinase C or GAPDH. Phosphorylation is critical for pregenomic RNA packaging. Protein kinase C phosphorylation is stimulated by HBx protein and may play a role in transport of the viral genome to the nucleus at the late step during the viral replication cycle.</text>
</comment>
<comment type="similarity">
    <text evidence="1">Belongs to the orthohepadnavirus core antigen family.</text>
</comment>
<comment type="sequence caution">
    <conflict type="erroneous initiation">
        <sequence resource="EMBL-CDS" id="AAK97202"/>
    </conflict>
</comment>
<gene>
    <name evidence="1" type="primary">C</name>
</gene>
<sequence length="185" mass="21426">MDIDPYKEFGATVELLSFLPSDFFPSVRDLLDTASALYREALESPEHCSPHHTALRETILCWGELMTLATWVGNNLEDPASRDLVVNYVNTNMGLKIRQLLWFHISCLTFGRETVLEYLVSFGVWIRTPPAYRPPNAPILSTLPETTVVRRRDRGRSPRRRTPSPRRRRSQSPRRRRSQSRESQC</sequence>
<protein>
    <recommendedName>
        <fullName evidence="1">Capsid protein</fullName>
    </recommendedName>
    <alternativeName>
        <fullName evidence="1">Core antigen</fullName>
    </alternativeName>
    <alternativeName>
        <fullName evidence="1">Core protein</fullName>
    </alternativeName>
    <alternativeName>
        <fullName evidence="1">HBcAg</fullName>
    </alternativeName>
    <alternativeName>
        <fullName evidence="1">p21.5</fullName>
    </alternativeName>
</protein>
<evidence type="ECO:0000255" key="1">
    <source>
        <dbReference type="HAMAP-Rule" id="MF_04076"/>
    </source>
</evidence>
<evidence type="ECO:0000256" key="2">
    <source>
        <dbReference type="SAM" id="MobiDB-lite"/>
    </source>
</evidence>
<feature type="chain" id="PRO_0000324354" description="Capsid protein">
    <location>
        <begin position="1"/>
        <end position="185"/>
    </location>
</feature>
<feature type="repeat" description="1; half-length">
    <location>
        <begin position="157"/>
        <end position="163"/>
    </location>
</feature>
<feature type="repeat" description="2">
    <location>
        <begin position="164"/>
        <end position="171"/>
    </location>
</feature>
<feature type="repeat" description="3">
    <location>
        <begin position="172"/>
        <end position="179"/>
    </location>
</feature>
<feature type="region of interest" description="Disordered" evidence="2">
    <location>
        <begin position="136"/>
        <end position="185"/>
    </location>
</feature>
<feature type="region of interest" description="3 X 8 AA repeats of S-P-R-R-R-[PR]-S-Q">
    <location>
        <begin position="157"/>
        <end position="179"/>
    </location>
</feature>
<feature type="region of interest" description="RNA binding" evidence="1">
    <location>
        <begin position="179"/>
        <end position="185"/>
    </location>
</feature>
<feature type="short sequence motif" description="Bipartite nuclear localization signal" evidence="1">
    <location>
        <begin position="160"/>
        <end position="177"/>
    </location>
</feature>
<feature type="compositionally biased region" description="Basic residues" evidence="2">
    <location>
        <begin position="149"/>
        <end position="178"/>
    </location>
</feature>
<feature type="modified residue" description="Phosphoserine; by host" evidence="1">
    <location>
        <position position="157"/>
    </location>
</feature>
<feature type="modified residue" description="Phosphoserine; by host" evidence="1">
    <location>
        <position position="164"/>
    </location>
</feature>
<feature type="modified residue" description="Phosphoserine; by host" evidence="1">
    <location>
        <position position="172"/>
    </location>
</feature>
<organism>
    <name type="scientific">Hepatitis B virus genotype A1 subtype adw2 (isolate South Africa/84/2001)</name>
    <name type="common">HBV-A</name>
    <dbReference type="NCBI Taxonomy" id="489454"/>
    <lineage>
        <taxon>Viruses</taxon>
        <taxon>Riboviria</taxon>
        <taxon>Pararnavirae</taxon>
        <taxon>Artverviricota</taxon>
        <taxon>Revtraviricetes</taxon>
        <taxon>Blubervirales</taxon>
        <taxon>Hepadnaviridae</taxon>
        <taxon>Orthohepadnavirus</taxon>
        <taxon>Hepatitis B virus</taxon>
    </lineage>
</organism>